<protein>
    <recommendedName>
        <fullName evidence="2">Large ribosomal subunit protein uL2</fullName>
    </recommendedName>
    <alternativeName>
        <fullName evidence="4">50S ribosomal protein L2</fullName>
    </alternativeName>
</protein>
<reference key="1">
    <citation type="journal article" date="2002" name="Proc. Natl. Acad. Sci. U.S.A.">
        <title>Extensive mosaic structure revealed by the complete genome sequence of uropathogenic Escherichia coli.</title>
        <authorList>
            <person name="Welch R.A."/>
            <person name="Burland V."/>
            <person name="Plunkett G. III"/>
            <person name="Redford P."/>
            <person name="Roesch P."/>
            <person name="Rasko D."/>
            <person name="Buckles E.L."/>
            <person name="Liou S.-R."/>
            <person name="Boutin A."/>
            <person name="Hackett J."/>
            <person name="Stroud D."/>
            <person name="Mayhew G.F."/>
            <person name="Rose D.J."/>
            <person name="Zhou S."/>
            <person name="Schwartz D.C."/>
            <person name="Perna N.T."/>
            <person name="Mobley H.L.T."/>
            <person name="Donnenberg M.S."/>
            <person name="Blattner F.R."/>
        </authorList>
    </citation>
    <scope>NUCLEOTIDE SEQUENCE [LARGE SCALE GENOMIC DNA]</scope>
    <source>
        <strain>CFT073 / ATCC 700928 / UPEC</strain>
    </source>
</reference>
<feature type="initiator methionine" description="Removed" evidence="1">
    <location>
        <position position="1"/>
    </location>
</feature>
<feature type="chain" id="PRO_0000129560" description="Large ribosomal subunit protein uL2">
    <location>
        <begin position="2"/>
        <end position="273"/>
    </location>
</feature>
<feature type="region of interest" description="Disordered" evidence="3">
    <location>
        <begin position="28"/>
        <end position="53"/>
    </location>
</feature>
<feature type="region of interest" description="Disordered" evidence="3">
    <location>
        <begin position="221"/>
        <end position="273"/>
    </location>
</feature>
<feature type="compositionally biased region" description="Low complexity" evidence="3">
    <location>
        <begin position="39"/>
        <end position="48"/>
    </location>
</feature>
<feature type="modified residue" description="N6-acetyllysine" evidence="2">
    <location>
        <position position="242"/>
    </location>
</feature>
<evidence type="ECO:0000250" key="1"/>
<evidence type="ECO:0000255" key="2">
    <source>
        <dbReference type="HAMAP-Rule" id="MF_01320"/>
    </source>
</evidence>
<evidence type="ECO:0000256" key="3">
    <source>
        <dbReference type="SAM" id="MobiDB-lite"/>
    </source>
</evidence>
<evidence type="ECO:0000305" key="4"/>
<sequence>MAVVKCKPTSPGRRHVVKVVNPELHKGKPFAPLLEKNSKSGGRNNNGRITTRHIGGGHKQAYRIVDFKRNKDGIPAVVERLEYDPNRSANIALVLYKDGERRYILAPKGLKAGDQIQSGVDAAIKPGNTLPMRNIPVGSTVHNVEMKPGKGGQLARSAGTYVQIVARDGAYVTLRLRSGEMRKVEADCRATLGEVGNAEHMLRVLGKAGAARWRGVRPTVRGTAMNPVDHPHGGGEGRNFGKHPVTPWGVQTKGKKTRSNKRTDKFIVRRRSK</sequence>
<proteinExistence type="inferred from homology"/>
<organism>
    <name type="scientific">Escherichia coli O6:H1 (strain CFT073 / ATCC 700928 / UPEC)</name>
    <dbReference type="NCBI Taxonomy" id="199310"/>
    <lineage>
        <taxon>Bacteria</taxon>
        <taxon>Pseudomonadati</taxon>
        <taxon>Pseudomonadota</taxon>
        <taxon>Gammaproteobacteria</taxon>
        <taxon>Enterobacterales</taxon>
        <taxon>Enterobacteriaceae</taxon>
        <taxon>Escherichia</taxon>
    </lineage>
</organism>
<gene>
    <name evidence="2" type="primary">rplB</name>
    <name type="ordered locus">c4085</name>
</gene>
<name>RL2_ECOL6</name>
<accession>P60423</accession>
<accession>P02387</accession>
<comment type="function">
    <text evidence="2">One of the primary rRNA binding proteins. Required for association of the 30S and 50S subunits to form the 70S ribosome, for tRNA binding and peptide bond formation. It has been suggested to have peptidyltransferase activity; this is somewhat controversial. Makes several contacts with the 16S rRNA in the 70S ribosome.</text>
</comment>
<comment type="subunit">
    <text evidence="2">Part of the 50S ribosomal subunit. Forms a bridge to the 30S subunit in the 70S ribosome.</text>
</comment>
<comment type="similarity">
    <text evidence="2">Belongs to the universal ribosomal protein uL2 family.</text>
</comment>
<keyword id="KW-0007">Acetylation</keyword>
<keyword id="KW-1185">Reference proteome</keyword>
<keyword id="KW-0687">Ribonucleoprotein</keyword>
<keyword id="KW-0689">Ribosomal protein</keyword>
<keyword id="KW-0694">RNA-binding</keyword>
<keyword id="KW-0699">rRNA-binding</keyword>
<dbReference type="EMBL" id="AE014075">
    <property type="protein sequence ID" value="AAN82523.1"/>
    <property type="molecule type" value="Genomic_DNA"/>
</dbReference>
<dbReference type="RefSeq" id="WP_000301864.1">
    <property type="nucleotide sequence ID" value="NZ_CP051263.1"/>
</dbReference>
<dbReference type="SMR" id="P60423"/>
<dbReference type="STRING" id="199310.c4085"/>
<dbReference type="GeneID" id="93778670"/>
<dbReference type="KEGG" id="ecc:c4085"/>
<dbReference type="eggNOG" id="COG0090">
    <property type="taxonomic scope" value="Bacteria"/>
</dbReference>
<dbReference type="HOGENOM" id="CLU_036235_2_1_6"/>
<dbReference type="BioCyc" id="ECOL199310:C4085-MONOMER"/>
<dbReference type="Proteomes" id="UP000001410">
    <property type="component" value="Chromosome"/>
</dbReference>
<dbReference type="GO" id="GO:0005829">
    <property type="term" value="C:cytosol"/>
    <property type="evidence" value="ECO:0007669"/>
    <property type="project" value="UniProtKB-ARBA"/>
</dbReference>
<dbReference type="GO" id="GO:0015934">
    <property type="term" value="C:large ribosomal subunit"/>
    <property type="evidence" value="ECO:0007669"/>
    <property type="project" value="InterPro"/>
</dbReference>
<dbReference type="GO" id="GO:0019843">
    <property type="term" value="F:rRNA binding"/>
    <property type="evidence" value="ECO:0007669"/>
    <property type="project" value="UniProtKB-UniRule"/>
</dbReference>
<dbReference type="GO" id="GO:0003735">
    <property type="term" value="F:structural constituent of ribosome"/>
    <property type="evidence" value="ECO:0007669"/>
    <property type="project" value="InterPro"/>
</dbReference>
<dbReference type="GO" id="GO:0016740">
    <property type="term" value="F:transferase activity"/>
    <property type="evidence" value="ECO:0007669"/>
    <property type="project" value="InterPro"/>
</dbReference>
<dbReference type="GO" id="GO:0002181">
    <property type="term" value="P:cytoplasmic translation"/>
    <property type="evidence" value="ECO:0007669"/>
    <property type="project" value="TreeGrafter"/>
</dbReference>
<dbReference type="FunFam" id="2.30.30.30:FF:000001">
    <property type="entry name" value="50S ribosomal protein L2"/>
    <property type="match status" value="1"/>
</dbReference>
<dbReference type="FunFam" id="2.40.50.140:FF:000003">
    <property type="entry name" value="50S ribosomal protein L2"/>
    <property type="match status" value="1"/>
</dbReference>
<dbReference type="FunFam" id="4.10.950.10:FF:000001">
    <property type="entry name" value="50S ribosomal protein L2"/>
    <property type="match status" value="1"/>
</dbReference>
<dbReference type="Gene3D" id="2.30.30.30">
    <property type="match status" value="1"/>
</dbReference>
<dbReference type="Gene3D" id="2.40.50.140">
    <property type="entry name" value="Nucleic acid-binding proteins"/>
    <property type="match status" value="1"/>
</dbReference>
<dbReference type="Gene3D" id="4.10.950.10">
    <property type="entry name" value="Ribosomal protein L2, domain 3"/>
    <property type="match status" value="1"/>
</dbReference>
<dbReference type="HAMAP" id="MF_01320_B">
    <property type="entry name" value="Ribosomal_uL2_B"/>
    <property type="match status" value="1"/>
</dbReference>
<dbReference type="InterPro" id="IPR012340">
    <property type="entry name" value="NA-bd_OB-fold"/>
</dbReference>
<dbReference type="InterPro" id="IPR014722">
    <property type="entry name" value="Rib_uL2_dom2"/>
</dbReference>
<dbReference type="InterPro" id="IPR002171">
    <property type="entry name" value="Ribosomal_uL2"/>
</dbReference>
<dbReference type="InterPro" id="IPR005880">
    <property type="entry name" value="Ribosomal_uL2_bac/org-type"/>
</dbReference>
<dbReference type="InterPro" id="IPR022669">
    <property type="entry name" value="Ribosomal_uL2_C"/>
</dbReference>
<dbReference type="InterPro" id="IPR022671">
    <property type="entry name" value="Ribosomal_uL2_CS"/>
</dbReference>
<dbReference type="InterPro" id="IPR014726">
    <property type="entry name" value="Ribosomal_uL2_dom3"/>
</dbReference>
<dbReference type="InterPro" id="IPR022666">
    <property type="entry name" value="Ribosomal_uL2_RNA-bd_dom"/>
</dbReference>
<dbReference type="InterPro" id="IPR008991">
    <property type="entry name" value="Translation_prot_SH3-like_sf"/>
</dbReference>
<dbReference type="NCBIfam" id="TIGR01171">
    <property type="entry name" value="rplB_bact"/>
    <property type="match status" value="1"/>
</dbReference>
<dbReference type="PANTHER" id="PTHR13691:SF5">
    <property type="entry name" value="LARGE RIBOSOMAL SUBUNIT PROTEIN UL2M"/>
    <property type="match status" value="1"/>
</dbReference>
<dbReference type="PANTHER" id="PTHR13691">
    <property type="entry name" value="RIBOSOMAL PROTEIN L2"/>
    <property type="match status" value="1"/>
</dbReference>
<dbReference type="Pfam" id="PF00181">
    <property type="entry name" value="Ribosomal_L2"/>
    <property type="match status" value="1"/>
</dbReference>
<dbReference type="Pfam" id="PF03947">
    <property type="entry name" value="Ribosomal_L2_C"/>
    <property type="match status" value="1"/>
</dbReference>
<dbReference type="PIRSF" id="PIRSF002158">
    <property type="entry name" value="Ribosomal_L2"/>
    <property type="match status" value="1"/>
</dbReference>
<dbReference type="SMART" id="SM01383">
    <property type="entry name" value="Ribosomal_L2"/>
    <property type="match status" value="1"/>
</dbReference>
<dbReference type="SMART" id="SM01382">
    <property type="entry name" value="Ribosomal_L2_C"/>
    <property type="match status" value="1"/>
</dbReference>
<dbReference type="SUPFAM" id="SSF50249">
    <property type="entry name" value="Nucleic acid-binding proteins"/>
    <property type="match status" value="1"/>
</dbReference>
<dbReference type="SUPFAM" id="SSF50104">
    <property type="entry name" value="Translation proteins SH3-like domain"/>
    <property type="match status" value="1"/>
</dbReference>
<dbReference type="PROSITE" id="PS00467">
    <property type="entry name" value="RIBOSOMAL_L2"/>
    <property type="match status" value="1"/>
</dbReference>